<accession>Q9JZU7</accession>
<name>DUT_NEIMB</name>
<reference key="1">
    <citation type="journal article" date="2000" name="Science">
        <title>Complete genome sequence of Neisseria meningitidis serogroup B strain MC58.</title>
        <authorList>
            <person name="Tettelin H."/>
            <person name="Saunders N.J."/>
            <person name="Heidelberg J.F."/>
            <person name="Jeffries A.C."/>
            <person name="Nelson K.E."/>
            <person name="Eisen J.A."/>
            <person name="Ketchum K.A."/>
            <person name="Hood D.W."/>
            <person name="Peden J.F."/>
            <person name="Dodson R.J."/>
            <person name="Nelson W.C."/>
            <person name="Gwinn M.L."/>
            <person name="DeBoy R.T."/>
            <person name="Peterson J.D."/>
            <person name="Hickey E.K."/>
            <person name="Haft D.H."/>
            <person name="Salzberg S.L."/>
            <person name="White O."/>
            <person name="Fleischmann R.D."/>
            <person name="Dougherty B.A."/>
            <person name="Mason T.M."/>
            <person name="Ciecko A."/>
            <person name="Parksey D.S."/>
            <person name="Blair E."/>
            <person name="Cittone H."/>
            <person name="Clark E.B."/>
            <person name="Cotton M.D."/>
            <person name="Utterback T.R."/>
            <person name="Khouri H.M."/>
            <person name="Qin H."/>
            <person name="Vamathevan J.J."/>
            <person name="Gill J."/>
            <person name="Scarlato V."/>
            <person name="Masignani V."/>
            <person name="Pizza M."/>
            <person name="Grandi G."/>
            <person name="Sun L."/>
            <person name="Smith H.O."/>
            <person name="Fraser C.M."/>
            <person name="Moxon E.R."/>
            <person name="Rappuoli R."/>
            <person name="Venter J.C."/>
        </authorList>
    </citation>
    <scope>NUCLEOTIDE SEQUENCE [LARGE SCALE GENOMIC DNA]</scope>
    <source>
        <strain>ATCC BAA-335 / MC58</strain>
    </source>
</reference>
<evidence type="ECO:0000255" key="1">
    <source>
        <dbReference type="HAMAP-Rule" id="MF_00116"/>
    </source>
</evidence>
<proteinExistence type="inferred from homology"/>
<comment type="function">
    <text evidence="1">This enzyme is involved in nucleotide metabolism: it produces dUMP, the immediate precursor of thymidine nucleotides and it decreases the intracellular concentration of dUTP so that uracil cannot be incorporated into DNA.</text>
</comment>
<comment type="catalytic activity">
    <reaction evidence="1">
        <text>dUTP + H2O = dUMP + diphosphate + H(+)</text>
        <dbReference type="Rhea" id="RHEA:10248"/>
        <dbReference type="ChEBI" id="CHEBI:15377"/>
        <dbReference type="ChEBI" id="CHEBI:15378"/>
        <dbReference type="ChEBI" id="CHEBI:33019"/>
        <dbReference type="ChEBI" id="CHEBI:61555"/>
        <dbReference type="ChEBI" id="CHEBI:246422"/>
        <dbReference type="EC" id="3.6.1.23"/>
    </reaction>
</comment>
<comment type="cofactor">
    <cofactor evidence="1">
        <name>Mg(2+)</name>
        <dbReference type="ChEBI" id="CHEBI:18420"/>
    </cofactor>
</comment>
<comment type="pathway">
    <text evidence="1">Pyrimidine metabolism; dUMP biosynthesis; dUMP from dCTP (dUTP route): step 2/2.</text>
</comment>
<comment type="similarity">
    <text evidence="1">Belongs to the dUTPase family.</text>
</comment>
<dbReference type="EC" id="3.6.1.23" evidence="1"/>
<dbReference type="EMBL" id="AE002098">
    <property type="protein sequence ID" value="AAF41302.1"/>
    <property type="molecule type" value="Genomic_DNA"/>
</dbReference>
<dbReference type="PIR" id="C81146">
    <property type="entry name" value="C81146"/>
</dbReference>
<dbReference type="RefSeq" id="NP_273934.1">
    <property type="nucleotide sequence ID" value="NC_003112.2"/>
</dbReference>
<dbReference type="RefSeq" id="WP_002225353.1">
    <property type="nucleotide sequence ID" value="NC_003112.2"/>
</dbReference>
<dbReference type="SMR" id="Q9JZU7"/>
<dbReference type="FunCoup" id="Q9JZU7">
    <property type="interactions" value="384"/>
</dbReference>
<dbReference type="STRING" id="122586.NMB0893"/>
<dbReference type="PaxDb" id="122586-NMB0893"/>
<dbReference type="KEGG" id="nme:NMB0893"/>
<dbReference type="PATRIC" id="fig|122586.8.peg.1119"/>
<dbReference type="HOGENOM" id="CLU_068508_1_1_4"/>
<dbReference type="InParanoid" id="Q9JZU7"/>
<dbReference type="OrthoDB" id="9809956at2"/>
<dbReference type="UniPathway" id="UPA00610">
    <property type="reaction ID" value="UER00666"/>
</dbReference>
<dbReference type="Proteomes" id="UP000000425">
    <property type="component" value="Chromosome"/>
</dbReference>
<dbReference type="GO" id="GO:0004170">
    <property type="term" value="F:dUTP diphosphatase activity"/>
    <property type="evidence" value="ECO:0000318"/>
    <property type="project" value="GO_Central"/>
</dbReference>
<dbReference type="GO" id="GO:0000287">
    <property type="term" value="F:magnesium ion binding"/>
    <property type="evidence" value="ECO:0000318"/>
    <property type="project" value="GO_Central"/>
</dbReference>
<dbReference type="GO" id="GO:0006226">
    <property type="term" value="P:dUMP biosynthetic process"/>
    <property type="evidence" value="ECO:0000318"/>
    <property type="project" value="GO_Central"/>
</dbReference>
<dbReference type="GO" id="GO:0046081">
    <property type="term" value="P:dUTP catabolic process"/>
    <property type="evidence" value="ECO:0000318"/>
    <property type="project" value="GO_Central"/>
</dbReference>
<dbReference type="CDD" id="cd07557">
    <property type="entry name" value="trimeric_dUTPase"/>
    <property type="match status" value="1"/>
</dbReference>
<dbReference type="FunFam" id="2.70.40.10:FF:000002">
    <property type="entry name" value="dUTP diphosphatase"/>
    <property type="match status" value="1"/>
</dbReference>
<dbReference type="Gene3D" id="2.70.40.10">
    <property type="match status" value="1"/>
</dbReference>
<dbReference type="HAMAP" id="MF_00116">
    <property type="entry name" value="dUTPase_bact"/>
    <property type="match status" value="1"/>
</dbReference>
<dbReference type="InterPro" id="IPR008181">
    <property type="entry name" value="dUTPase"/>
</dbReference>
<dbReference type="InterPro" id="IPR029054">
    <property type="entry name" value="dUTPase-like"/>
</dbReference>
<dbReference type="InterPro" id="IPR036157">
    <property type="entry name" value="dUTPase-like_sf"/>
</dbReference>
<dbReference type="InterPro" id="IPR033704">
    <property type="entry name" value="dUTPase_trimeric"/>
</dbReference>
<dbReference type="NCBIfam" id="TIGR00576">
    <property type="entry name" value="dut"/>
    <property type="match status" value="1"/>
</dbReference>
<dbReference type="NCBIfam" id="NF001862">
    <property type="entry name" value="PRK00601.1"/>
    <property type="match status" value="1"/>
</dbReference>
<dbReference type="PANTHER" id="PTHR11241">
    <property type="entry name" value="DEOXYURIDINE 5'-TRIPHOSPHATE NUCLEOTIDOHYDROLASE"/>
    <property type="match status" value="1"/>
</dbReference>
<dbReference type="PANTHER" id="PTHR11241:SF0">
    <property type="entry name" value="DEOXYURIDINE 5'-TRIPHOSPHATE NUCLEOTIDOHYDROLASE"/>
    <property type="match status" value="1"/>
</dbReference>
<dbReference type="Pfam" id="PF00692">
    <property type="entry name" value="dUTPase"/>
    <property type="match status" value="1"/>
</dbReference>
<dbReference type="SUPFAM" id="SSF51283">
    <property type="entry name" value="dUTPase-like"/>
    <property type="match status" value="1"/>
</dbReference>
<keyword id="KW-0378">Hydrolase</keyword>
<keyword id="KW-0460">Magnesium</keyword>
<keyword id="KW-0479">Metal-binding</keyword>
<keyword id="KW-0546">Nucleotide metabolism</keyword>
<keyword id="KW-1185">Reference proteome</keyword>
<sequence length="150" mass="16129">MNIEVEMKVLDERMADVVPVYATEGSAGLDLRACLDEEVVLQPGETFLVPTGLAIYLANPAYAAVLLPRSGLGHKHGIVLGNLVGLIDSDYQGELKVSLWNRSSEPFTVKPFERIAQMVVVPIVQAGFKRVEEFVGSSRGEGGFGSTGSH</sequence>
<organism>
    <name type="scientific">Neisseria meningitidis serogroup B (strain ATCC BAA-335 / MC58)</name>
    <dbReference type="NCBI Taxonomy" id="122586"/>
    <lineage>
        <taxon>Bacteria</taxon>
        <taxon>Pseudomonadati</taxon>
        <taxon>Pseudomonadota</taxon>
        <taxon>Betaproteobacteria</taxon>
        <taxon>Neisseriales</taxon>
        <taxon>Neisseriaceae</taxon>
        <taxon>Neisseria</taxon>
    </lineage>
</organism>
<feature type="chain" id="PRO_0000182886" description="Deoxyuridine 5'-triphosphate nucleotidohydrolase">
    <location>
        <begin position="1"/>
        <end position="150"/>
    </location>
</feature>
<feature type="binding site" evidence="1">
    <location>
        <begin position="69"/>
        <end position="71"/>
    </location>
    <ligand>
        <name>substrate</name>
    </ligand>
</feature>
<feature type="binding site" evidence="1">
    <location>
        <position position="82"/>
    </location>
    <ligand>
        <name>substrate</name>
    </ligand>
</feature>
<feature type="binding site" evidence="1">
    <location>
        <begin position="86"/>
        <end position="88"/>
    </location>
    <ligand>
        <name>substrate</name>
    </ligand>
</feature>
<feature type="binding site" evidence="1">
    <location>
        <position position="96"/>
    </location>
    <ligand>
        <name>substrate</name>
    </ligand>
</feature>
<gene>
    <name evidence="1" type="primary">dut</name>
    <name type="ordered locus">NMB0893</name>
</gene>
<protein>
    <recommendedName>
        <fullName evidence="1">Deoxyuridine 5'-triphosphate nucleotidohydrolase</fullName>
        <shortName evidence="1">dUTPase</shortName>
        <ecNumber evidence="1">3.6.1.23</ecNumber>
    </recommendedName>
    <alternativeName>
        <fullName evidence="1">dUTP pyrophosphatase</fullName>
    </alternativeName>
</protein>